<name>HIS3_PSESM</name>
<keyword id="KW-0028">Amino-acid biosynthesis</keyword>
<keyword id="KW-0963">Cytoplasm</keyword>
<keyword id="KW-0368">Histidine biosynthesis</keyword>
<keyword id="KW-0378">Hydrolase</keyword>
<keyword id="KW-0460">Magnesium</keyword>
<keyword id="KW-0479">Metal-binding</keyword>
<keyword id="KW-1185">Reference proteome</keyword>
<keyword id="KW-0862">Zinc</keyword>
<accession>Q87UY9</accession>
<comment type="function">
    <text evidence="1">Catalyzes the hydrolysis of the adenine ring of phosphoribosyl-AMP.</text>
</comment>
<comment type="catalytic activity">
    <reaction evidence="1">
        <text>1-(5-phospho-beta-D-ribosyl)-5'-AMP + H2O = 1-(5-phospho-beta-D-ribosyl)-5-[(5-phospho-beta-D-ribosylamino)methylideneamino]imidazole-4-carboxamide</text>
        <dbReference type="Rhea" id="RHEA:20049"/>
        <dbReference type="ChEBI" id="CHEBI:15377"/>
        <dbReference type="ChEBI" id="CHEBI:58435"/>
        <dbReference type="ChEBI" id="CHEBI:59457"/>
        <dbReference type="EC" id="3.5.4.19"/>
    </reaction>
</comment>
<comment type="cofactor">
    <cofactor evidence="1">
        <name>Mg(2+)</name>
        <dbReference type="ChEBI" id="CHEBI:18420"/>
    </cofactor>
    <text evidence="1">Binds 1 Mg(2+) ion per subunit.</text>
</comment>
<comment type="cofactor">
    <cofactor evidence="1">
        <name>Zn(2+)</name>
        <dbReference type="ChEBI" id="CHEBI:29105"/>
    </cofactor>
    <text evidence="1">Binds 1 zinc ion per subunit.</text>
</comment>
<comment type="pathway">
    <text evidence="1">Amino-acid biosynthesis; L-histidine biosynthesis; L-histidine from 5-phospho-alpha-D-ribose 1-diphosphate: step 3/9.</text>
</comment>
<comment type="subunit">
    <text evidence="1">Homodimer.</text>
</comment>
<comment type="subcellular location">
    <subcellularLocation>
        <location evidence="1">Cytoplasm</location>
    </subcellularLocation>
</comment>
<comment type="similarity">
    <text evidence="1">Belongs to the PRA-CH family.</text>
</comment>
<feature type="chain" id="PRO_0000136493" description="Phosphoribosyl-AMP cyclohydrolase">
    <location>
        <begin position="1"/>
        <end position="130"/>
    </location>
</feature>
<feature type="binding site" evidence="1">
    <location>
        <position position="77"/>
    </location>
    <ligand>
        <name>Mg(2+)</name>
        <dbReference type="ChEBI" id="CHEBI:18420"/>
    </ligand>
</feature>
<feature type="binding site" evidence="1">
    <location>
        <position position="78"/>
    </location>
    <ligand>
        <name>Zn(2+)</name>
        <dbReference type="ChEBI" id="CHEBI:29105"/>
        <note>ligand shared between dimeric partners</note>
    </ligand>
</feature>
<feature type="binding site" evidence="1">
    <location>
        <position position="79"/>
    </location>
    <ligand>
        <name>Mg(2+)</name>
        <dbReference type="ChEBI" id="CHEBI:18420"/>
    </ligand>
</feature>
<feature type="binding site" evidence="1">
    <location>
        <position position="81"/>
    </location>
    <ligand>
        <name>Mg(2+)</name>
        <dbReference type="ChEBI" id="CHEBI:18420"/>
    </ligand>
</feature>
<feature type="binding site" evidence="1">
    <location>
        <position position="95"/>
    </location>
    <ligand>
        <name>Zn(2+)</name>
        <dbReference type="ChEBI" id="CHEBI:29105"/>
        <note>ligand shared between dimeric partners</note>
    </ligand>
</feature>
<feature type="binding site" evidence="1">
    <location>
        <position position="102"/>
    </location>
    <ligand>
        <name>Zn(2+)</name>
        <dbReference type="ChEBI" id="CHEBI:29105"/>
        <note>ligand shared between dimeric partners</note>
    </ligand>
</feature>
<gene>
    <name evidence="1" type="primary">hisI</name>
    <name type="ordered locus">PSPTO_5153</name>
</gene>
<sequence length="130" mass="14927">MKDWLDEIHWNSDGLVPAIAQDRKTGRVLMMAWMNREALSLTASENRAIYWSRSRGKLWRKGEESGHVQKLHELRLDCDADVIILMVEQIGGIACHTGRESCFYRVYEQSGWKTVDPVLKDPDAIYPAGH</sequence>
<reference key="1">
    <citation type="journal article" date="2003" name="Proc. Natl. Acad. Sci. U.S.A.">
        <title>The complete genome sequence of the Arabidopsis and tomato pathogen Pseudomonas syringae pv. tomato DC3000.</title>
        <authorList>
            <person name="Buell C.R."/>
            <person name="Joardar V."/>
            <person name="Lindeberg M."/>
            <person name="Selengut J."/>
            <person name="Paulsen I.T."/>
            <person name="Gwinn M.L."/>
            <person name="Dodson R.J."/>
            <person name="DeBoy R.T."/>
            <person name="Durkin A.S."/>
            <person name="Kolonay J.F."/>
            <person name="Madupu R."/>
            <person name="Daugherty S.C."/>
            <person name="Brinkac L.M."/>
            <person name="Beanan M.J."/>
            <person name="Haft D.H."/>
            <person name="Nelson W.C."/>
            <person name="Davidsen T.M."/>
            <person name="Zafar N."/>
            <person name="Zhou L."/>
            <person name="Liu J."/>
            <person name="Yuan Q."/>
            <person name="Khouri H.M."/>
            <person name="Fedorova N.B."/>
            <person name="Tran B."/>
            <person name="Russell D."/>
            <person name="Berry K.J."/>
            <person name="Utterback T.R."/>
            <person name="Van Aken S.E."/>
            <person name="Feldblyum T.V."/>
            <person name="D'Ascenzo M."/>
            <person name="Deng W.-L."/>
            <person name="Ramos A.R."/>
            <person name="Alfano J.R."/>
            <person name="Cartinhour S."/>
            <person name="Chatterjee A.K."/>
            <person name="Delaney T.P."/>
            <person name="Lazarowitz S.G."/>
            <person name="Martin G.B."/>
            <person name="Schneider D.J."/>
            <person name="Tang X."/>
            <person name="Bender C.L."/>
            <person name="White O."/>
            <person name="Fraser C.M."/>
            <person name="Collmer A."/>
        </authorList>
    </citation>
    <scope>NUCLEOTIDE SEQUENCE [LARGE SCALE GENOMIC DNA]</scope>
    <source>
        <strain>ATCC BAA-871 / DC3000</strain>
    </source>
</reference>
<organism>
    <name type="scientific">Pseudomonas syringae pv. tomato (strain ATCC BAA-871 / DC3000)</name>
    <dbReference type="NCBI Taxonomy" id="223283"/>
    <lineage>
        <taxon>Bacteria</taxon>
        <taxon>Pseudomonadati</taxon>
        <taxon>Pseudomonadota</taxon>
        <taxon>Gammaproteobacteria</taxon>
        <taxon>Pseudomonadales</taxon>
        <taxon>Pseudomonadaceae</taxon>
        <taxon>Pseudomonas</taxon>
    </lineage>
</organism>
<dbReference type="EC" id="3.5.4.19" evidence="1"/>
<dbReference type="EMBL" id="AE016853">
    <property type="protein sequence ID" value="AAO58579.1"/>
    <property type="molecule type" value="Genomic_DNA"/>
</dbReference>
<dbReference type="RefSeq" id="NP_794884.1">
    <property type="nucleotide sequence ID" value="NC_004578.1"/>
</dbReference>
<dbReference type="RefSeq" id="WP_011105339.1">
    <property type="nucleotide sequence ID" value="NC_004578.1"/>
</dbReference>
<dbReference type="SMR" id="Q87UY9"/>
<dbReference type="STRING" id="223283.PSPTO_5153"/>
<dbReference type="GeneID" id="1186838"/>
<dbReference type="KEGG" id="pst:PSPTO_5153"/>
<dbReference type="PATRIC" id="fig|223283.9.peg.5274"/>
<dbReference type="eggNOG" id="COG0139">
    <property type="taxonomic scope" value="Bacteria"/>
</dbReference>
<dbReference type="HOGENOM" id="CLU_048577_5_0_6"/>
<dbReference type="OrthoDB" id="9795769at2"/>
<dbReference type="PhylomeDB" id="Q87UY9"/>
<dbReference type="UniPathway" id="UPA00031">
    <property type="reaction ID" value="UER00008"/>
</dbReference>
<dbReference type="Proteomes" id="UP000002515">
    <property type="component" value="Chromosome"/>
</dbReference>
<dbReference type="GO" id="GO:0005737">
    <property type="term" value="C:cytoplasm"/>
    <property type="evidence" value="ECO:0007669"/>
    <property type="project" value="UniProtKB-SubCell"/>
</dbReference>
<dbReference type="GO" id="GO:0000287">
    <property type="term" value="F:magnesium ion binding"/>
    <property type="evidence" value="ECO:0007669"/>
    <property type="project" value="UniProtKB-UniRule"/>
</dbReference>
<dbReference type="GO" id="GO:0004635">
    <property type="term" value="F:phosphoribosyl-AMP cyclohydrolase activity"/>
    <property type="evidence" value="ECO:0007669"/>
    <property type="project" value="UniProtKB-UniRule"/>
</dbReference>
<dbReference type="GO" id="GO:0008270">
    <property type="term" value="F:zinc ion binding"/>
    <property type="evidence" value="ECO:0007669"/>
    <property type="project" value="UniProtKB-UniRule"/>
</dbReference>
<dbReference type="GO" id="GO:0000105">
    <property type="term" value="P:L-histidine biosynthetic process"/>
    <property type="evidence" value="ECO:0007669"/>
    <property type="project" value="UniProtKB-UniRule"/>
</dbReference>
<dbReference type="FunFam" id="3.10.20.810:FF:000001">
    <property type="entry name" value="Histidine biosynthesis bifunctional protein HisIE"/>
    <property type="match status" value="1"/>
</dbReference>
<dbReference type="Gene3D" id="3.10.20.810">
    <property type="entry name" value="Phosphoribosyl-AMP cyclohydrolase"/>
    <property type="match status" value="1"/>
</dbReference>
<dbReference type="HAMAP" id="MF_01021">
    <property type="entry name" value="HisI"/>
    <property type="match status" value="1"/>
</dbReference>
<dbReference type="InterPro" id="IPR026660">
    <property type="entry name" value="PRA-CH"/>
</dbReference>
<dbReference type="InterPro" id="IPR002496">
    <property type="entry name" value="PRib_AMP_CycHydrolase_dom"/>
</dbReference>
<dbReference type="InterPro" id="IPR038019">
    <property type="entry name" value="PRib_AMP_CycHydrolase_sf"/>
</dbReference>
<dbReference type="NCBIfam" id="NF000768">
    <property type="entry name" value="PRK00051.1"/>
    <property type="match status" value="1"/>
</dbReference>
<dbReference type="PANTHER" id="PTHR42945">
    <property type="entry name" value="HISTIDINE BIOSYNTHESIS BIFUNCTIONAL PROTEIN"/>
    <property type="match status" value="1"/>
</dbReference>
<dbReference type="PANTHER" id="PTHR42945:SF1">
    <property type="entry name" value="HISTIDINE BIOSYNTHESIS BIFUNCTIONAL PROTEIN HIS7"/>
    <property type="match status" value="1"/>
</dbReference>
<dbReference type="Pfam" id="PF01502">
    <property type="entry name" value="PRA-CH"/>
    <property type="match status" value="1"/>
</dbReference>
<dbReference type="SUPFAM" id="SSF141734">
    <property type="entry name" value="HisI-like"/>
    <property type="match status" value="1"/>
</dbReference>
<protein>
    <recommendedName>
        <fullName evidence="1">Phosphoribosyl-AMP cyclohydrolase</fullName>
        <shortName evidence="1">PRA-CH</shortName>
        <ecNumber evidence="1">3.5.4.19</ecNumber>
    </recommendedName>
</protein>
<proteinExistence type="inferred from homology"/>
<evidence type="ECO:0000255" key="1">
    <source>
        <dbReference type="HAMAP-Rule" id="MF_01021"/>
    </source>
</evidence>